<name>YNEA_LISIN</name>
<proteinExistence type="inferred from homology"/>
<keyword id="KW-0131">Cell cycle</keyword>
<keyword id="KW-0132">Cell division</keyword>
<keyword id="KW-0963">Cytoplasm</keyword>
<keyword id="KW-0227">DNA damage</keyword>
<keyword id="KW-0234">DNA repair</keyword>
<keyword id="KW-0717">Septation</keyword>
<keyword id="KW-0742">SOS response</keyword>
<organism>
    <name type="scientific">Listeria innocua serovar 6a (strain ATCC BAA-680 / CLIP 11262)</name>
    <dbReference type="NCBI Taxonomy" id="272626"/>
    <lineage>
        <taxon>Bacteria</taxon>
        <taxon>Bacillati</taxon>
        <taxon>Bacillota</taxon>
        <taxon>Bacilli</taxon>
        <taxon>Bacillales</taxon>
        <taxon>Listeriaceae</taxon>
        <taxon>Listeria</taxon>
    </lineage>
</organism>
<protein>
    <recommendedName>
        <fullName evidence="1">Cell division suppressor protein YneA</fullName>
    </recommendedName>
</protein>
<gene>
    <name evidence="1" type="primary">yneA</name>
    <name type="ordered locus">lin1341</name>
</gene>
<dbReference type="EMBL" id="AL596168">
    <property type="protein sequence ID" value="CAC96572.1"/>
    <property type="molecule type" value="Genomic_DNA"/>
</dbReference>
<dbReference type="PIR" id="AD1600">
    <property type="entry name" value="AD1600"/>
</dbReference>
<dbReference type="RefSeq" id="WP_010990936.1">
    <property type="nucleotide sequence ID" value="NC_003212.1"/>
</dbReference>
<dbReference type="SMR" id="Q92C50"/>
<dbReference type="STRING" id="272626.gene:17565672"/>
<dbReference type="DNASU" id="1129932"/>
<dbReference type="KEGG" id="lin:lin1341"/>
<dbReference type="eggNOG" id="COG1388">
    <property type="taxonomic scope" value="Bacteria"/>
</dbReference>
<dbReference type="HOGENOM" id="CLU_136034_4_0_9"/>
<dbReference type="OrthoDB" id="2679564at2"/>
<dbReference type="Proteomes" id="UP000002513">
    <property type="component" value="Chromosome"/>
</dbReference>
<dbReference type="GO" id="GO:0005737">
    <property type="term" value="C:cytoplasm"/>
    <property type="evidence" value="ECO:0007669"/>
    <property type="project" value="UniProtKB-SubCell"/>
</dbReference>
<dbReference type="GO" id="GO:0000917">
    <property type="term" value="P:division septum assembly"/>
    <property type="evidence" value="ECO:0007669"/>
    <property type="project" value="UniProtKB-KW"/>
</dbReference>
<dbReference type="GO" id="GO:0006281">
    <property type="term" value="P:DNA repair"/>
    <property type="evidence" value="ECO:0007669"/>
    <property type="project" value="UniProtKB-KW"/>
</dbReference>
<dbReference type="GO" id="GO:0051782">
    <property type="term" value="P:negative regulation of cell division"/>
    <property type="evidence" value="ECO:0007669"/>
    <property type="project" value="UniProtKB-UniRule"/>
</dbReference>
<dbReference type="GO" id="GO:0009432">
    <property type="term" value="P:SOS response"/>
    <property type="evidence" value="ECO:0007669"/>
    <property type="project" value="UniProtKB-UniRule"/>
</dbReference>
<dbReference type="Gene3D" id="3.10.350.10">
    <property type="entry name" value="LysM domain"/>
    <property type="match status" value="1"/>
</dbReference>
<dbReference type="HAMAP" id="MF_02014">
    <property type="entry name" value="YneA"/>
    <property type="match status" value="1"/>
</dbReference>
<dbReference type="InterPro" id="IPR022887">
    <property type="entry name" value="Cell_div_suppressor_YneA"/>
</dbReference>
<dbReference type="InterPro" id="IPR018392">
    <property type="entry name" value="LysM_dom"/>
</dbReference>
<dbReference type="InterPro" id="IPR036779">
    <property type="entry name" value="LysM_dom_sf"/>
</dbReference>
<dbReference type="NCBIfam" id="NF010723">
    <property type="entry name" value="PRK14125.1"/>
    <property type="match status" value="1"/>
</dbReference>
<dbReference type="PROSITE" id="PS51782">
    <property type="entry name" value="LYSM"/>
    <property type="match status" value="1"/>
</dbReference>
<evidence type="ECO:0000255" key="1">
    <source>
        <dbReference type="HAMAP-Rule" id="MF_02014"/>
    </source>
</evidence>
<evidence type="ECO:0000255" key="2">
    <source>
        <dbReference type="PROSITE-ProRule" id="PRU01118"/>
    </source>
</evidence>
<reference key="1">
    <citation type="journal article" date="2001" name="Science">
        <title>Comparative genomics of Listeria species.</title>
        <authorList>
            <person name="Glaser P."/>
            <person name="Frangeul L."/>
            <person name="Buchrieser C."/>
            <person name="Rusniok C."/>
            <person name="Amend A."/>
            <person name="Baquero F."/>
            <person name="Berche P."/>
            <person name="Bloecker H."/>
            <person name="Brandt P."/>
            <person name="Chakraborty T."/>
            <person name="Charbit A."/>
            <person name="Chetouani F."/>
            <person name="Couve E."/>
            <person name="de Daruvar A."/>
            <person name="Dehoux P."/>
            <person name="Domann E."/>
            <person name="Dominguez-Bernal G."/>
            <person name="Duchaud E."/>
            <person name="Durant L."/>
            <person name="Dussurget O."/>
            <person name="Entian K.-D."/>
            <person name="Fsihi H."/>
            <person name="Garcia-del Portillo F."/>
            <person name="Garrido P."/>
            <person name="Gautier L."/>
            <person name="Goebel W."/>
            <person name="Gomez-Lopez N."/>
            <person name="Hain T."/>
            <person name="Hauf J."/>
            <person name="Jackson D."/>
            <person name="Jones L.-M."/>
            <person name="Kaerst U."/>
            <person name="Kreft J."/>
            <person name="Kuhn M."/>
            <person name="Kunst F."/>
            <person name="Kurapkat G."/>
            <person name="Madueno E."/>
            <person name="Maitournam A."/>
            <person name="Mata Vicente J."/>
            <person name="Ng E."/>
            <person name="Nedjari H."/>
            <person name="Nordsiek G."/>
            <person name="Novella S."/>
            <person name="de Pablos B."/>
            <person name="Perez-Diaz J.-C."/>
            <person name="Purcell R."/>
            <person name="Remmel B."/>
            <person name="Rose M."/>
            <person name="Schlueter T."/>
            <person name="Simoes N."/>
            <person name="Tierrez A."/>
            <person name="Vazquez-Boland J.-A."/>
            <person name="Voss H."/>
            <person name="Wehland J."/>
            <person name="Cossart P."/>
        </authorList>
    </citation>
    <scope>NUCLEOTIDE SEQUENCE [LARGE SCALE GENOMIC DNA]</scope>
    <source>
        <strain>ATCC BAA-680 / CLIP 11262</strain>
    </source>
</reference>
<accession>Q92C50</accession>
<comment type="function">
    <text evidence="1">Inhibits cell division during the SOS response. Affects a later stage of the cell division protein assembly, after the assembly of the Z ring, by probably suppressing recruitment of FtsL and/or DivIC to the division machinery.</text>
</comment>
<comment type="subcellular location">
    <subcellularLocation>
        <location evidence="1">Cytoplasm</location>
    </subcellularLocation>
</comment>
<comment type="similarity">
    <text evidence="1">Belongs to the YneA family.</text>
</comment>
<sequence length="109" mass="12116">MTLKLIWDKFYVSIIFVITCLVLGIILMCTVIGSGSEYSEVDVNEGDSIWALADQYAAKSDMAKADFVSWVEKENNLTDGHVKAGDYVVIPVHETKLQRSDSTIQLANQ</sequence>
<feature type="chain" id="PRO_0000346644" description="Cell division suppressor protein YneA">
    <location>
        <begin position="1"/>
        <end position="109"/>
    </location>
</feature>
<feature type="domain" description="LysM" evidence="2">
    <location>
        <begin position="39"/>
        <end position="90"/>
    </location>
</feature>